<proteinExistence type="evidence at protein level"/>
<keyword id="KW-0002">3D-structure</keyword>
<keyword id="KW-0012">Acyltransferase</keyword>
<keyword id="KW-0028">Amino-acid biosynthesis</keyword>
<keyword id="KW-0963">Cytoplasm</keyword>
<keyword id="KW-0220">Diaminopimelate biosynthesis</keyword>
<keyword id="KW-0457">Lysine biosynthesis</keyword>
<keyword id="KW-0677">Repeat</keyword>
<keyword id="KW-0808">Transferase</keyword>
<dbReference type="EC" id="2.3.1.117"/>
<dbReference type="PDB" id="1KGQ">
    <property type="method" value="X-ray"/>
    <property type="resolution" value="2.00 A"/>
    <property type="chains" value="A=1-274"/>
</dbReference>
<dbReference type="PDB" id="1KGT">
    <property type="method" value="X-ray"/>
    <property type="resolution" value="2.30 A"/>
    <property type="chains" value="A=1-274"/>
</dbReference>
<dbReference type="PDB" id="1TDT">
    <property type="method" value="X-ray"/>
    <property type="resolution" value="2.20 A"/>
    <property type="chains" value="A/B/C=1-259"/>
</dbReference>
<dbReference type="PDB" id="2TDT">
    <property type="method" value="X-ray"/>
    <property type="resolution" value="2.00 A"/>
    <property type="chains" value="A=1-274"/>
</dbReference>
<dbReference type="PDB" id="3TDT">
    <property type="method" value="X-ray"/>
    <property type="resolution" value="2.00 A"/>
    <property type="chains" value="A=1-274"/>
</dbReference>
<dbReference type="PDBsum" id="1KGQ"/>
<dbReference type="PDBsum" id="1KGT"/>
<dbReference type="PDBsum" id="1TDT"/>
<dbReference type="PDBsum" id="2TDT"/>
<dbReference type="PDBsum" id="3TDT"/>
<dbReference type="SMR" id="P56220"/>
<dbReference type="DrugBank" id="DB01992">
    <property type="generic name" value="Coenzyme A"/>
</dbReference>
<dbReference type="DrugBank" id="DB03134">
    <property type="generic name" value="L-2-aminopimelic acid"/>
</dbReference>
<dbReference type="DrugBank" id="DB01856">
    <property type="generic name" value="Pimelic Acid"/>
</dbReference>
<dbReference type="DrugBank" id="DB03905">
    <property type="generic name" value="Succinamide-CoA"/>
</dbReference>
<dbReference type="DrugBank" id="DB03699">
    <property type="generic name" value="Succinyl-Coenzyme A"/>
</dbReference>
<dbReference type="UniPathway" id="UPA00034">
    <property type="reaction ID" value="UER00019"/>
</dbReference>
<dbReference type="EvolutionaryTrace" id="P56220"/>
<dbReference type="GO" id="GO:0005737">
    <property type="term" value="C:cytoplasm"/>
    <property type="evidence" value="ECO:0007669"/>
    <property type="project" value="UniProtKB-SubCell"/>
</dbReference>
<dbReference type="GO" id="GO:0008666">
    <property type="term" value="F:2,3,4,5-tetrahydropyridine-2,6-dicarboxylate N-succinyltransferase activity"/>
    <property type="evidence" value="ECO:0007669"/>
    <property type="project" value="UniProtKB-UniRule"/>
</dbReference>
<dbReference type="GO" id="GO:0016779">
    <property type="term" value="F:nucleotidyltransferase activity"/>
    <property type="evidence" value="ECO:0007669"/>
    <property type="project" value="TreeGrafter"/>
</dbReference>
<dbReference type="GO" id="GO:0019877">
    <property type="term" value="P:diaminopimelate biosynthetic process"/>
    <property type="evidence" value="ECO:0007669"/>
    <property type="project" value="UniProtKB-UniRule"/>
</dbReference>
<dbReference type="GO" id="GO:0009089">
    <property type="term" value="P:lysine biosynthetic process via diaminopimelate"/>
    <property type="evidence" value="ECO:0007669"/>
    <property type="project" value="UniProtKB-UniRule"/>
</dbReference>
<dbReference type="CDD" id="cd03350">
    <property type="entry name" value="LbH_THP_succinylT"/>
    <property type="match status" value="1"/>
</dbReference>
<dbReference type="FunFam" id="2.160.10.10:FF:000004">
    <property type="entry name" value="2,3,4,5-tetrahydropyridine-2,6-dicarboxylate N-succinyltransferase"/>
    <property type="match status" value="1"/>
</dbReference>
<dbReference type="Gene3D" id="2.160.10.10">
    <property type="entry name" value="Hexapeptide repeat proteins"/>
    <property type="match status" value="1"/>
</dbReference>
<dbReference type="Gene3D" id="1.10.166.10">
    <property type="entry name" value="Tetrahydrodipicolinate-N-succinyltransferase, N-terminal domain"/>
    <property type="match status" value="1"/>
</dbReference>
<dbReference type="HAMAP" id="MF_00811">
    <property type="entry name" value="DapD"/>
    <property type="match status" value="1"/>
</dbReference>
<dbReference type="InterPro" id="IPR005664">
    <property type="entry name" value="DapD_Trfase_Hexpep_rpt_fam"/>
</dbReference>
<dbReference type="InterPro" id="IPR001451">
    <property type="entry name" value="Hexapep"/>
</dbReference>
<dbReference type="InterPro" id="IPR018357">
    <property type="entry name" value="Hexapep_transf_CS"/>
</dbReference>
<dbReference type="InterPro" id="IPR023180">
    <property type="entry name" value="THP_succinylTrfase_dom1"/>
</dbReference>
<dbReference type="InterPro" id="IPR037133">
    <property type="entry name" value="THP_succinylTrfase_N_sf"/>
</dbReference>
<dbReference type="InterPro" id="IPR011004">
    <property type="entry name" value="Trimer_LpxA-like_sf"/>
</dbReference>
<dbReference type="NCBIfam" id="TIGR00965">
    <property type="entry name" value="dapD"/>
    <property type="match status" value="1"/>
</dbReference>
<dbReference type="NCBIfam" id="NF008808">
    <property type="entry name" value="PRK11830.1"/>
    <property type="match status" value="1"/>
</dbReference>
<dbReference type="PANTHER" id="PTHR19136:SF52">
    <property type="entry name" value="2,3,4,5-TETRAHYDROPYRIDINE-2,6-DICARBOXYLATE N-SUCCINYLTRANSFERASE"/>
    <property type="match status" value="1"/>
</dbReference>
<dbReference type="PANTHER" id="PTHR19136">
    <property type="entry name" value="MOLYBDENUM COFACTOR GUANYLYLTRANSFERASE"/>
    <property type="match status" value="1"/>
</dbReference>
<dbReference type="Pfam" id="PF14602">
    <property type="entry name" value="Hexapep_2"/>
    <property type="match status" value="1"/>
</dbReference>
<dbReference type="Pfam" id="PF14805">
    <property type="entry name" value="THDPS_N_2"/>
    <property type="match status" value="1"/>
</dbReference>
<dbReference type="SUPFAM" id="SSF51161">
    <property type="entry name" value="Trimeric LpxA-like enzymes"/>
    <property type="match status" value="1"/>
</dbReference>
<dbReference type="PROSITE" id="PS00101">
    <property type="entry name" value="HEXAPEP_TRANSFERASES"/>
    <property type="match status" value="1"/>
</dbReference>
<sequence length="274" mass="29887">MQQLQNVIESAFERRADITPANVDTVTREAVNQVIGLLDSGALRVAEKIDGQWVTHQWLKKAVLLSFRINDNKVMDGAETRYYDKVPMKFADYDEARFQKEGFRVVPPATVRQGAFIARNTVLMPSYVNIGAYVDEGTMVDTWATVGSCAQIGKNVHLSGGVGIGGVLEPLQANPTIIEDNCFIGARSEVVEGVIVEEGSVISMGVYLGQSTRIYDRETGEIHYGRVPAGSVVVSGNLPSKDGSYSLYCAVIVKKVDAKTRGKVGINELLRTID</sequence>
<protein>
    <recommendedName>
        <fullName>2,3,4,5-tetrahydropyridine-2,6-dicarboxylate N-succinyltransferase</fullName>
        <ecNumber>2.3.1.117</ecNumber>
    </recommendedName>
    <alternativeName>
        <fullName>Tetrahydrodipicolinate N-succinyltransferase</fullName>
        <shortName>THDP succinyltransferase</shortName>
        <shortName>THP succinyltransferase</shortName>
        <shortName>Tetrahydropicolinate succinylase</shortName>
    </alternativeName>
</protein>
<name>DAPD_UNKP</name>
<comment type="catalytic activity">
    <reaction>
        <text>(S)-2,3,4,5-tetrahydrodipicolinate + succinyl-CoA + H2O = (S)-2-succinylamino-6-oxoheptanedioate + CoA</text>
        <dbReference type="Rhea" id="RHEA:17325"/>
        <dbReference type="ChEBI" id="CHEBI:15377"/>
        <dbReference type="ChEBI" id="CHEBI:15685"/>
        <dbReference type="ChEBI" id="CHEBI:16845"/>
        <dbReference type="ChEBI" id="CHEBI:57287"/>
        <dbReference type="ChEBI" id="CHEBI:57292"/>
        <dbReference type="EC" id="2.3.1.117"/>
    </reaction>
</comment>
<comment type="activity regulation">
    <text evidence="1">Inhibited by p-(chloromercuri)benzenesulfonic acid and cobalt.</text>
</comment>
<comment type="pathway">
    <text>Amino-acid biosynthesis; L-lysine biosynthesis via DAP pathway; LL-2,6-diaminopimelate from (S)-tetrahydrodipicolinate (succinylase route): step 1/3.</text>
</comment>
<comment type="subunit">
    <text evidence="1">Homotrimer.</text>
</comment>
<comment type="subcellular location">
    <subcellularLocation>
        <location>Cytoplasm</location>
    </subcellularLocation>
</comment>
<comment type="similarity">
    <text evidence="2">Belongs to the transferase hexapeptide repeat family.</text>
</comment>
<comment type="caution">
    <text evidence="3">Was originally thought to originate from Mycobacterium bovis (PubMed:11910040, PubMed:8880935, PubMed:9012664, PubMed:9671504). However, there is now convincing evidence that this is incorrect (PubMed:19394346). The source is unknown, but the sequence similarity suggests the protein is of enterobacterial origin.</text>
</comment>
<organism>
    <name type="scientific">Unknown prokaryotic organism</name>
    <dbReference type="NCBI Taxonomy" id="2725"/>
    <lineage>
        <taxon>Bacteria</taxon>
        <taxon>environmental samples</taxon>
    </lineage>
</organism>
<evidence type="ECO:0000269" key="1">
    <source>
    </source>
</evidence>
<evidence type="ECO:0000305" key="2"/>
<evidence type="ECO:0000305" key="3">
    <source>
    </source>
</evidence>
<evidence type="ECO:0007829" key="4">
    <source>
        <dbReference type="PDB" id="1KGQ"/>
    </source>
</evidence>
<evidence type="ECO:0007829" key="5">
    <source>
        <dbReference type="PDB" id="1TDT"/>
    </source>
</evidence>
<feature type="chain" id="PRO_0000196949" description="2,3,4,5-tetrahydropyridine-2,6-dicarboxylate N-succinyltransferase">
    <location>
        <begin position="1"/>
        <end position="274"/>
    </location>
</feature>
<feature type="binding site">
    <location>
        <position position="104"/>
    </location>
    <ligand>
        <name>substrate</name>
    </ligand>
</feature>
<feature type="binding site">
    <location>
        <position position="141"/>
    </location>
    <ligand>
        <name>substrate</name>
    </ligand>
</feature>
<feature type="helix" evidence="4">
    <location>
        <begin position="2"/>
        <end position="13"/>
    </location>
</feature>
<feature type="helix" evidence="4">
    <location>
        <begin position="14"/>
        <end position="17"/>
    </location>
</feature>
<feature type="turn" evidence="4">
    <location>
        <begin position="20"/>
        <end position="22"/>
    </location>
</feature>
<feature type="helix" evidence="4">
    <location>
        <begin position="25"/>
        <end position="39"/>
    </location>
</feature>
<feature type="strand" evidence="4">
    <location>
        <begin position="45"/>
        <end position="49"/>
    </location>
</feature>
<feature type="strand" evidence="4">
    <location>
        <begin position="52"/>
        <end position="55"/>
    </location>
</feature>
<feature type="helix" evidence="4">
    <location>
        <begin position="57"/>
        <end position="69"/>
    </location>
</feature>
<feature type="strand" evidence="4">
    <location>
        <begin position="73"/>
        <end position="76"/>
    </location>
</feature>
<feature type="strand" evidence="4">
    <location>
        <begin position="78"/>
        <end position="86"/>
    </location>
</feature>
<feature type="helix" evidence="4">
    <location>
        <begin position="89"/>
        <end position="92"/>
    </location>
</feature>
<feature type="helix" evidence="4">
    <location>
        <begin position="95"/>
        <end position="101"/>
    </location>
</feature>
<feature type="strand" evidence="4">
    <location>
        <begin position="110"/>
        <end position="112"/>
    </location>
</feature>
<feature type="strand" evidence="4">
    <location>
        <begin position="125"/>
        <end position="128"/>
    </location>
</feature>
<feature type="strand" evidence="4">
    <location>
        <begin position="144"/>
        <end position="146"/>
    </location>
</feature>
<feature type="turn" evidence="4">
    <location>
        <begin position="168"/>
        <end position="171"/>
    </location>
</feature>
<feature type="strand" evidence="4">
    <location>
        <begin position="214"/>
        <end position="216"/>
    </location>
</feature>
<feature type="turn" evidence="4">
    <location>
        <begin position="217"/>
        <end position="219"/>
    </location>
</feature>
<feature type="strand" evidence="5">
    <location>
        <begin position="221"/>
        <end position="223"/>
    </location>
</feature>
<feature type="strand" evidence="4">
    <location>
        <begin position="225"/>
        <end position="227"/>
    </location>
</feature>
<feature type="strand" evidence="4">
    <location>
        <begin position="231"/>
        <end position="239"/>
    </location>
</feature>
<feature type="strand" evidence="4">
    <location>
        <begin position="241"/>
        <end position="244"/>
    </location>
</feature>
<feature type="strand" evidence="4">
    <location>
        <begin position="246"/>
        <end position="255"/>
    </location>
</feature>
<feature type="helix" evidence="4">
    <location>
        <begin position="258"/>
        <end position="264"/>
    </location>
</feature>
<feature type="helix" evidence="4">
    <location>
        <begin position="268"/>
        <end position="270"/>
    </location>
</feature>
<accession>P56220</accession>
<gene>
    <name type="primary">dapD</name>
</gene>
<reference key="1">
    <citation type="journal article" date="1996" name="Proteins">
        <title>Crystallization and preliminary crystallographic analysis of tetrahydrodipicolinate-N-succinyltransferase.</title>
        <authorList>
            <person name="Binder D.A."/>
            <person name="Blanchard J.S."/>
            <person name="Roderick S.L."/>
        </authorList>
    </citation>
    <scope>NUCLEOTIDE SEQUENCE [GENOMIC DNA]</scope>
    <scope>CRYSTALLIZATION</scope>
</reference>
<reference key="2">
    <citation type="journal article" date="2009" name="J. Mol. Biol.">
        <title>The three-dimensional structure of a mycobacterial DapD provides insights into DapD diversity and reveals unexpected particulars about the enzymatic mechanism.</title>
        <authorList>
            <person name="Schuldt L."/>
            <person name="Weyand S."/>
            <person name="Kefala G."/>
            <person name="Weiss M.S."/>
        </authorList>
    </citation>
    <scope>DISCUSSION OF ORIGIN OF SEQUENCE</scope>
</reference>
<reference key="3">
    <citation type="journal article" date="1997" name="Biochemistry">
        <title>Three-dimensional structure of tetrahydrodipicolinate N-succinyltransferase.</title>
        <authorList>
            <person name="Beaman T.W."/>
            <person name="Binder D.A."/>
            <person name="Blanchard J.S."/>
            <person name="Roderick S.L."/>
        </authorList>
    </citation>
    <scope>X-RAY CRYSTALLOGRAPHY (2.2 ANGSTROMS)</scope>
    <scope>ACTIVITY REGULATION</scope>
    <scope>SUBUNIT</scope>
</reference>
<reference key="4">
    <citation type="journal article" date="1998" name="Biochemistry">
        <title>The conformational change and active site structure of tetrahydrodipicolinate N-succinyltransferase.</title>
        <authorList>
            <person name="Beaman T.W."/>
            <person name="Blanchard J.S."/>
            <person name="Roderick S.L."/>
        </authorList>
    </citation>
    <scope>X-RAY CRYSTALLOGRAPHY (2.0 ANGSTROMS) IN COMPLEXES WITH ANALOGS SUBSTRATE</scope>
</reference>
<reference key="5">
    <citation type="journal article" date="2002" name="Protein Sci.">
        <title>Acyl group specificity at the active site of tetrahydrodipicolinate N-succinyltransferase.</title>
        <authorList>
            <person name="Beaman T.W."/>
            <person name="Vogel K.W."/>
            <person name="Drueckhammer D.G."/>
            <person name="Blanchard J.S."/>
            <person name="Roderick S.L."/>
        </authorList>
    </citation>
    <scope>X-RAY CRYSTALLOGRAPHY (2.0 ANGSTROMS) IN COMPLEXES WITH ANALOGS SUBSTRATES</scope>
</reference>